<feature type="initiator methionine" description="Removed" evidence="27">
    <location>
        <position position="1"/>
    </location>
</feature>
<feature type="chain" id="PRO_0000116908" description="S-adenosylhomocysteine hydrolase-like protein 1">
    <location>
        <begin position="2"/>
        <end position="530"/>
    </location>
</feature>
<feature type="region of interest" description="Disordered" evidence="4">
    <location>
        <begin position="53"/>
        <end position="103"/>
    </location>
</feature>
<feature type="region of interest" description="PEST" evidence="12">
    <location>
        <begin position="65"/>
        <end position="92"/>
    </location>
</feature>
<feature type="region of interest" description="Interaction with BCL2L10" evidence="13">
    <location>
        <begin position="138"/>
        <end position="201"/>
    </location>
</feature>
<feature type="region of interest" description="NAD binding" evidence="1">
    <location>
        <begin position="281"/>
        <end position="448"/>
    </location>
</feature>
<feature type="region of interest" description="PDZ-binding" evidence="1">
    <location>
        <begin position="520"/>
        <end position="530"/>
    </location>
</feature>
<feature type="compositionally biased region" description="Low complexity" evidence="4">
    <location>
        <begin position="64"/>
        <end position="83"/>
    </location>
</feature>
<feature type="binding site" evidence="1">
    <location>
        <position position="155"/>
    </location>
    <ligand>
        <name>substrate</name>
    </ligand>
</feature>
<feature type="binding site" evidence="1">
    <location>
        <position position="229"/>
    </location>
    <ligand>
        <name>substrate</name>
    </ligand>
</feature>
<feature type="binding site" evidence="1">
    <location>
        <position position="254"/>
    </location>
    <ligand>
        <name>substrate</name>
    </ligand>
</feature>
<feature type="binding site" evidence="1">
    <location>
        <position position="284"/>
    </location>
    <ligand>
        <name>substrate</name>
    </ligand>
</feature>
<feature type="binding site" evidence="1">
    <location>
        <position position="288"/>
    </location>
    <ligand>
        <name>substrate</name>
    </ligand>
</feature>
<feature type="binding site" evidence="12">
    <location>
        <begin position="318"/>
        <end position="322"/>
    </location>
    <ligand>
        <name>NAD(+)</name>
        <dbReference type="ChEBI" id="CHEBI:57540"/>
    </ligand>
</feature>
<feature type="binding site" evidence="12">
    <location>
        <position position="341"/>
    </location>
    <ligand>
        <name>NAD(+)</name>
        <dbReference type="ChEBI" id="CHEBI:57540"/>
    </ligand>
</feature>
<feature type="binding site" evidence="12">
    <location>
        <position position="376"/>
    </location>
    <ligand>
        <name>NAD(+)</name>
        <dbReference type="ChEBI" id="CHEBI:57540"/>
    </ligand>
</feature>
<feature type="binding site" evidence="12">
    <location>
        <begin position="397"/>
        <end position="399"/>
    </location>
    <ligand>
        <name>NAD(+)</name>
        <dbReference type="ChEBI" id="CHEBI:57540"/>
    </ligand>
</feature>
<feature type="modified residue" description="N-acetylserine" evidence="27">
    <location>
        <position position="2"/>
    </location>
</feature>
<feature type="modified residue" description="Phosphoserine" evidence="27 29">
    <location>
        <position position="2"/>
    </location>
</feature>
<feature type="modified residue" description="N6-acetyllysine" evidence="3">
    <location>
        <position position="40"/>
    </location>
</feature>
<feature type="modified residue" description="Phosphoserine" evidence="13 22 23">
    <location>
        <position position="68"/>
    </location>
</feature>
<feature type="modified residue" description="Phosphoserine" evidence="13 22 23">
    <location>
        <position position="71"/>
    </location>
</feature>
<feature type="modified residue" description="Phosphoserine" evidence="13 23">
    <location>
        <position position="74"/>
    </location>
</feature>
<feature type="modified residue" description="Phosphoserine" evidence="13 23">
    <location>
        <position position="77"/>
    </location>
</feature>
<feature type="modified residue" description="Phosphoserine" evidence="3">
    <location>
        <position position="84"/>
    </location>
</feature>
<feature type="modified residue" description="Phosphoserine" evidence="26">
    <location>
        <position position="391"/>
    </location>
</feature>
<feature type="splice variant" id="VSP_021751" description="In isoform 2." evidence="16 17 18 19 20">
    <location>
        <begin position="1"/>
        <end position="47"/>
    </location>
</feature>
<feature type="mutagenesis site" description="No effect on interaction with SLC4A4." evidence="6">
    <original>T</original>
    <variation>A</variation>
    <location>
        <position position="52"/>
    </location>
</feature>
<feature type="mutagenesis site" description="No effect on interaction with SLC4A4." evidence="6">
    <original>T</original>
    <variation>A</variation>
    <location>
        <position position="58"/>
    </location>
</feature>
<feature type="mutagenesis site" description="No effect on interaction with SLC4A4. No effect on interaction with FIP1L1." evidence="6 10">
    <original>S</original>
    <variation>A</variation>
    <location>
        <position position="62"/>
    </location>
</feature>
<feature type="mutagenesis site" description="No effect on interaction with ITPR1. No effect on phosphorylation. No effect on interaction with SLC4A4. No effect on interaction with FIP1L1." evidence="6 7 10">
    <original>S</original>
    <variation>A</variation>
    <location>
        <position position="64"/>
    </location>
</feature>
<feature type="mutagenesis site" description="Slightly decreases interaction with ITPR1. Slightly decreases phosphorylation. No effect on interaction with SLC4A4. Abolishes interaction with FIP1L1." evidence="6 7 10">
    <original>S</original>
    <variation>A</variation>
    <location>
        <position position="66"/>
    </location>
</feature>
<feature type="mutagenesis site" description="Highly decreases phosphorylation. Abolishes interaction with ITPR1. No effect on interaction with BCL2L10. Marked decrease in interaction of BCL2L10 with ITPR1. Decreased ability of BCL2L10 to reduce ITPR1-mediated calcium release and to prevent apoptosis. No effect on formation of multimers. Abolishes interaction with SLC4A4. Abolishes interaction with FIP1L1. Highly decreases interaction with SLC9A3. Highly decreases interaction with SLC9A3; when associated with A-71 and A-74." evidence="6 7 10 11 13">
    <original>S</original>
    <variation>A</variation>
    <location>
        <position position="68"/>
    </location>
</feature>
<feature type="mutagenesis site" description="Highly decreases interaction with ITPR1. No effect on phosphorylation. No effect on interaction with SLC4A4. Abolishes interaction with FIP1L1." evidence="6 7 10">
    <original>S</original>
    <variation>A</variation>
    <location>
        <position position="70"/>
    </location>
</feature>
<feature type="mutagenesis site" description="Abolishes interaction with ITPR1. Highly decreases phosphorylation. Abolishes interaction with SLC4A4. Abolishes interaction with FIP1L1. Highly decreases interaction with SLC9A3; when associated with A-68 and A-74." evidence="6 7 10 11">
    <original>S</original>
    <variation>A</variation>
    <location>
        <position position="71"/>
    </location>
</feature>
<feature type="mutagenesis site" description="Highly decreases interaction with ITPR1. Slightly increases phosphorylation. No effect on interaction with SLC4A4. Highly decreases interaction with FIP1L1." evidence="6 7 10">
    <original>T</original>
    <variation>A</variation>
    <location>
        <position position="72"/>
    </location>
</feature>
<feature type="mutagenesis site" description="Abolishes interaction with ITPR1. Slightly decreases phosphorylation. Strongly decreases interaction with SLC4A4. Abolishes interaction with FIP1L1. Highly decreases interaction with SLC9A3; when associated with A-68 and A-71." evidence="6 7 10 11">
    <original>S</original>
    <variation>G</variation>
    <location>
        <position position="74"/>
    </location>
</feature>
<feature type="mutagenesis site" description="No effect on interaction with ITPR1. No effect on phosphorylation. No effect on interaction with SLC4A4. No effect on interaction with FIP1L1." evidence="6 7 10">
    <original>S</original>
    <variation>G</variation>
    <location>
        <position position="76"/>
    </location>
</feature>
<feature type="mutagenesis site" description="Highly decreases interaction with ITPR1. Slightly decreases phosphorylation. Strongly decreases interaction with SLC4A4. Abolishes interaction with FIP1L1." evidence="6 7 10">
    <original>S</original>
    <variation>A</variation>
    <location>
        <position position="77"/>
    </location>
</feature>
<feature type="mutagenesis site" description="No effect on interaction with SLC4A4. Highly decreases interaction with FIP1L1." evidence="6 7 10">
    <original>S</original>
    <variation>A</variation>
    <location>
        <position position="80"/>
    </location>
</feature>
<feature type="mutagenesis site" description="No effect on interaction with ITPR1. No effect on phosphorylation. No effect on interaction with SLC4A4. Decreases interaction with FIP1L1." evidence="6 7 10">
    <original>T</original>
    <variation>A</variation>
    <location>
        <position position="82"/>
    </location>
</feature>
<feature type="mutagenesis site" description="Slightly decreases interaction with ITPR1. No effect on phosphorylation. No effect on interaction with SLC4A4. Decreases interaction with FIP1L1." evidence="6 7 10">
    <original>S</original>
    <variation>A</variation>
    <location>
        <position position="84"/>
    </location>
</feature>
<feature type="mutagenesis site" description="Slightly decreases interaction with ITPR1. No effect on phosphorylation. No effect on interaction with SLC4A4. Decreases interaction with FIP1L1." evidence="6 7 10">
    <original>S</original>
    <variation>A</variation>
    <location>
        <position position="85"/>
    </location>
</feature>
<feature type="mutagenesis site" description="No effect on interaction with ITPR1. No effect on phosphorylation. No effect on interaction with SLC4A4. No effect on interaction with FIP1L1." evidence="6 7 10">
    <original>S</original>
    <variation>A</variation>
    <location>
        <position position="90"/>
    </location>
</feature>
<feature type="mutagenesis site" description="No effect on interaction with ITPR1. No effect on interaction with SLC4A4. No effect on interaction with FIP1L1." evidence="6 7 10">
    <original>T</original>
    <variation>A</variation>
    <location>
        <position position="97"/>
    </location>
</feature>
<feature type="sequence conflict" description="In Ref. 9; T19009." evidence="21" ref="9">
    <original>K</original>
    <variation>M</variation>
    <location>
        <position position="94"/>
    </location>
</feature>
<feature type="sequence conflict" description="In Ref. 9; T19009." evidence="21" ref="9">
    <original>S</original>
    <variation>F</variation>
    <location>
        <position position="99"/>
    </location>
</feature>
<feature type="helix" evidence="30">
    <location>
        <begin position="113"/>
        <end position="124"/>
    </location>
</feature>
<feature type="helix" evidence="30">
    <location>
        <begin position="128"/>
        <end position="137"/>
    </location>
</feature>
<feature type="turn" evidence="30">
    <location>
        <begin position="142"/>
        <end position="145"/>
    </location>
</feature>
<feature type="strand" evidence="30">
    <location>
        <begin position="147"/>
        <end position="152"/>
    </location>
</feature>
<feature type="helix" evidence="30">
    <location>
        <begin position="156"/>
        <end position="167"/>
    </location>
</feature>
<feature type="strand" evidence="30">
    <location>
        <begin position="171"/>
        <end position="175"/>
    </location>
</feature>
<feature type="strand" evidence="30">
    <location>
        <begin position="177"/>
        <end position="180"/>
    </location>
</feature>
<feature type="helix" evidence="30">
    <location>
        <begin position="184"/>
        <end position="193"/>
    </location>
</feature>
<feature type="strand" evidence="30">
    <location>
        <begin position="196"/>
        <end position="198"/>
    </location>
</feature>
<feature type="helix" evidence="30">
    <location>
        <begin position="205"/>
        <end position="216"/>
    </location>
</feature>
<feature type="strand" evidence="30">
    <location>
        <begin position="224"/>
        <end position="231"/>
    </location>
</feature>
<feature type="helix" evidence="30">
    <location>
        <begin position="232"/>
        <end position="240"/>
    </location>
</feature>
<feature type="helix" evidence="30">
    <location>
        <begin position="242"/>
        <end position="245"/>
    </location>
</feature>
<feature type="strand" evidence="30">
    <location>
        <begin position="249"/>
        <end position="253"/>
    </location>
</feature>
<feature type="helix" evidence="30">
    <location>
        <begin position="256"/>
        <end position="265"/>
    </location>
</feature>
<feature type="turn" evidence="30">
    <location>
        <begin position="266"/>
        <end position="269"/>
    </location>
</feature>
<feature type="strand" evidence="30">
    <location>
        <begin position="275"/>
        <end position="277"/>
    </location>
</feature>
<feature type="helix" evidence="30">
    <location>
        <begin position="282"/>
        <end position="293"/>
    </location>
</feature>
<feature type="helix" evidence="30">
    <location>
        <begin position="299"/>
        <end position="305"/>
    </location>
</feature>
<feature type="strand" evidence="30">
    <location>
        <begin position="313"/>
        <end position="317"/>
    </location>
</feature>
<feature type="helix" evidence="30">
    <location>
        <begin position="321"/>
        <end position="333"/>
    </location>
</feature>
<feature type="strand" evidence="30">
    <location>
        <begin position="336"/>
        <end position="340"/>
    </location>
</feature>
<feature type="helix" evidence="30">
    <location>
        <begin position="344"/>
        <end position="352"/>
    </location>
</feature>
<feature type="helix" evidence="30">
    <location>
        <begin position="360"/>
        <end position="362"/>
    </location>
</feature>
<feature type="turn" evidence="30">
    <location>
        <begin position="363"/>
        <end position="366"/>
    </location>
</feature>
<feature type="strand" evidence="30">
    <location>
        <begin position="368"/>
        <end position="372"/>
    </location>
</feature>
<feature type="helix" evidence="30">
    <location>
        <begin position="382"/>
        <end position="387"/>
    </location>
</feature>
<feature type="strand" evidence="30">
    <location>
        <begin position="392"/>
        <end position="396"/>
    </location>
</feature>
<feature type="turn" evidence="30">
    <location>
        <begin position="400"/>
        <end position="403"/>
    </location>
</feature>
<feature type="helix" evidence="30">
    <location>
        <begin position="406"/>
        <end position="409"/>
    </location>
</feature>
<feature type="strand" evidence="30">
    <location>
        <begin position="415"/>
        <end position="420"/>
    </location>
</feature>
<feature type="strand" evidence="30">
    <location>
        <begin position="423"/>
        <end position="427"/>
    </location>
</feature>
<feature type="strand" evidence="30">
    <location>
        <begin position="433"/>
        <end position="437"/>
    </location>
</feature>
<feature type="helix" evidence="30">
    <location>
        <begin position="438"/>
        <end position="440"/>
    </location>
</feature>
<feature type="helix" evidence="30">
    <location>
        <begin position="444"/>
        <end position="446"/>
    </location>
</feature>
<feature type="helix" evidence="30">
    <location>
        <begin position="452"/>
        <end position="471"/>
    </location>
</feature>
<feature type="strand" evidence="30">
    <location>
        <begin position="479"/>
        <end position="482"/>
    </location>
</feature>
<feature type="helix" evidence="30">
    <location>
        <begin position="486"/>
        <end position="496"/>
    </location>
</feature>
<feature type="helix" evidence="30">
    <location>
        <begin position="497"/>
        <end position="500"/>
    </location>
</feature>
<feature type="helix" evidence="30">
    <location>
        <begin position="509"/>
        <end position="514"/>
    </location>
</feature>
<feature type="strand" evidence="30">
    <location>
        <begin position="519"/>
        <end position="521"/>
    </location>
</feature>
<feature type="modified residue" description="N-acetylmethionine" evidence="28">
    <location sequence="O43865-2">
        <position position="1"/>
    </location>
</feature>
<reference key="1">
    <citation type="journal article" date="2002" name="Immunogenetics">
        <title>Identification of an S-adenosylhomocysteine hydrolase-like transcript induced during dendritic cell differentiation.</title>
        <authorList>
            <person name="Dekker J.W."/>
            <person name="Budhia S."/>
            <person name="Angel N.Z."/>
            <person name="Cooper B.J."/>
            <person name="Clark G.J."/>
            <person name="Hart D.N."/>
            <person name="Kato M."/>
        </authorList>
    </citation>
    <scope>NUCLEOTIDE SEQUENCE [MRNA] (ISOFORM 1)</scope>
    <scope>TISSUE SPECIFICITY</scope>
    <scope>DEVELOPMENTAL STAGE</scope>
</reference>
<reference key="2">
    <citation type="journal article" date="2004" name="Nat. Genet.">
        <title>Complete sequencing and characterization of 21,243 full-length human cDNAs.</title>
        <authorList>
            <person name="Ota T."/>
            <person name="Suzuki Y."/>
            <person name="Nishikawa T."/>
            <person name="Otsuki T."/>
            <person name="Sugiyama T."/>
            <person name="Irie R."/>
            <person name="Wakamatsu A."/>
            <person name="Hayashi K."/>
            <person name="Sato H."/>
            <person name="Nagai K."/>
            <person name="Kimura K."/>
            <person name="Makita H."/>
            <person name="Sekine M."/>
            <person name="Obayashi M."/>
            <person name="Nishi T."/>
            <person name="Shibahara T."/>
            <person name="Tanaka T."/>
            <person name="Ishii S."/>
            <person name="Yamamoto J."/>
            <person name="Saito K."/>
            <person name="Kawai Y."/>
            <person name="Isono Y."/>
            <person name="Nakamura Y."/>
            <person name="Nagahari K."/>
            <person name="Murakami K."/>
            <person name="Yasuda T."/>
            <person name="Iwayanagi T."/>
            <person name="Wagatsuma M."/>
            <person name="Shiratori A."/>
            <person name="Sudo H."/>
            <person name="Hosoiri T."/>
            <person name="Kaku Y."/>
            <person name="Kodaira H."/>
            <person name="Kondo H."/>
            <person name="Sugawara M."/>
            <person name="Takahashi M."/>
            <person name="Kanda K."/>
            <person name="Yokoi T."/>
            <person name="Furuya T."/>
            <person name="Kikkawa E."/>
            <person name="Omura Y."/>
            <person name="Abe K."/>
            <person name="Kamihara K."/>
            <person name="Katsuta N."/>
            <person name="Sato K."/>
            <person name="Tanikawa M."/>
            <person name="Yamazaki M."/>
            <person name="Ninomiya K."/>
            <person name="Ishibashi T."/>
            <person name="Yamashita H."/>
            <person name="Murakawa K."/>
            <person name="Fujimori K."/>
            <person name="Tanai H."/>
            <person name="Kimata M."/>
            <person name="Watanabe M."/>
            <person name="Hiraoka S."/>
            <person name="Chiba Y."/>
            <person name="Ishida S."/>
            <person name="Ono Y."/>
            <person name="Takiguchi S."/>
            <person name="Watanabe S."/>
            <person name="Yosida M."/>
            <person name="Hotuta T."/>
            <person name="Kusano J."/>
            <person name="Kanehori K."/>
            <person name="Takahashi-Fujii A."/>
            <person name="Hara H."/>
            <person name="Tanase T.-O."/>
            <person name="Nomura Y."/>
            <person name="Togiya S."/>
            <person name="Komai F."/>
            <person name="Hara R."/>
            <person name="Takeuchi K."/>
            <person name="Arita M."/>
            <person name="Imose N."/>
            <person name="Musashino K."/>
            <person name="Yuuki H."/>
            <person name="Oshima A."/>
            <person name="Sasaki N."/>
            <person name="Aotsuka S."/>
            <person name="Yoshikawa Y."/>
            <person name="Matsunawa H."/>
            <person name="Ichihara T."/>
            <person name="Shiohata N."/>
            <person name="Sano S."/>
            <person name="Moriya S."/>
            <person name="Momiyama H."/>
            <person name="Satoh N."/>
            <person name="Takami S."/>
            <person name="Terashima Y."/>
            <person name="Suzuki O."/>
            <person name="Nakagawa S."/>
            <person name="Senoh A."/>
            <person name="Mizoguchi H."/>
            <person name="Goto Y."/>
            <person name="Shimizu F."/>
            <person name="Wakebe H."/>
            <person name="Hishigaki H."/>
            <person name="Watanabe T."/>
            <person name="Sugiyama A."/>
            <person name="Takemoto M."/>
            <person name="Kawakami B."/>
            <person name="Yamazaki M."/>
            <person name="Watanabe K."/>
            <person name="Kumagai A."/>
            <person name="Itakura S."/>
            <person name="Fukuzumi Y."/>
            <person name="Fujimori Y."/>
            <person name="Komiyama M."/>
            <person name="Tashiro H."/>
            <person name="Tanigami A."/>
            <person name="Fujiwara T."/>
            <person name="Ono T."/>
            <person name="Yamada K."/>
            <person name="Fujii Y."/>
            <person name="Ozaki K."/>
            <person name="Hirao M."/>
            <person name="Ohmori Y."/>
            <person name="Kawabata A."/>
            <person name="Hikiji T."/>
            <person name="Kobatake N."/>
            <person name="Inagaki H."/>
            <person name="Ikema Y."/>
            <person name="Okamoto S."/>
            <person name="Okitani R."/>
            <person name="Kawakami T."/>
            <person name="Noguchi S."/>
            <person name="Itoh T."/>
            <person name="Shigeta K."/>
            <person name="Senba T."/>
            <person name="Matsumura K."/>
            <person name="Nakajima Y."/>
            <person name="Mizuno T."/>
            <person name="Morinaga M."/>
            <person name="Sasaki M."/>
            <person name="Togashi T."/>
            <person name="Oyama M."/>
            <person name="Hata H."/>
            <person name="Watanabe M."/>
            <person name="Komatsu T."/>
            <person name="Mizushima-Sugano J."/>
            <person name="Satoh T."/>
            <person name="Shirai Y."/>
            <person name="Takahashi Y."/>
            <person name="Nakagawa K."/>
            <person name="Okumura K."/>
            <person name="Nagase T."/>
            <person name="Nomura N."/>
            <person name="Kikuchi H."/>
            <person name="Masuho Y."/>
            <person name="Yamashita R."/>
            <person name="Nakai K."/>
            <person name="Yada T."/>
            <person name="Nakamura Y."/>
            <person name="Ohara O."/>
            <person name="Isogai T."/>
            <person name="Sugano S."/>
        </authorList>
    </citation>
    <scope>NUCLEOTIDE SEQUENCE [LARGE SCALE MRNA] (ISOFORM 2)</scope>
    <source>
        <tissue>Kidney</tissue>
        <tissue>Thalamus</tissue>
    </source>
</reference>
<reference key="3">
    <citation type="journal article" date="2007" name="BMC Genomics">
        <title>The full-ORF clone resource of the German cDNA consortium.</title>
        <authorList>
            <person name="Bechtel S."/>
            <person name="Rosenfelder H."/>
            <person name="Duda A."/>
            <person name="Schmidt C.P."/>
            <person name="Ernst U."/>
            <person name="Wellenreuther R."/>
            <person name="Mehrle A."/>
            <person name="Schuster C."/>
            <person name="Bahr A."/>
            <person name="Bloecker H."/>
            <person name="Heubner D."/>
            <person name="Hoerlein A."/>
            <person name="Michel G."/>
            <person name="Wedler H."/>
            <person name="Koehrer K."/>
            <person name="Ottenwaelder B."/>
            <person name="Poustka A."/>
            <person name="Wiemann S."/>
            <person name="Schupp I."/>
        </authorList>
    </citation>
    <scope>NUCLEOTIDE SEQUENCE [LARGE SCALE MRNA] (ISOFORM 2)</scope>
    <source>
        <tissue>Brain</tissue>
    </source>
</reference>
<reference key="4">
    <citation type="journal article" date="2006" name="Nature">
        <title>The DNA sequence and biological annotation of human chromosome 1.</title>
        <authorList>
            <person name="Gregory S.G."/>
            <person name="Barlow K.F."/>
            <person name="McLay K.E."/>
            <person name="Kaul R."/>
            <person name="Swarbreck D."/>
            <person name="Dunham A."/>
            <person name="Scott C.E."/>
            <person name="Howe K.L."/>
            <person name="Woodfine K."/>
            <person name="Spencer C.C.A."/>
            <person name="Jones M.C."/>
            <person name="Gillson C."/>
            <person name="Searle S."/>
            <person name="Zhou Y."/>
            <person name="Kokocinski F."/>
            <person name="McDonald L."/>
            <person name="Evans R."/>
            <person name="Phillips K."/>
            <person name="Atkinson A."/>
            <person name="Cooper R."/>
            <person name="Jones C."/>
            <person name="Hall R.E."/>
            <person name="Andrews T.D."/>
            <person name="Lloyd C."/>
            <person name="Ainscough R."/>
            <person name="Almeida J.P."/>
            <person name="Ambrose K.D."/>
            <person name="Anderson F."/>
            <person name="Andrew R.W."/>
            <person name="Ashwell R.I.S."/>
            <person name="Aubin K."/>
            <person name="Babbage A.K."/>
            <person name="Bagguley C.L."/>
            <person name="Bailey J."/>
            <person name="Beasley H."/>
            <person name="Bethel G."/>
            <person name="Bird C.P."/>
            <person name="Bray-Allen S."/>
            <person name="Brown J.Y."/>
            <person name="Brown A.J."/>
            <person name="Buckley D."/>
            <person name="Burton J."/>
            <person name="Bye J."/>
            <person name="Carder C."/>
            <person name="Chapman J.C."/>
            <person name="Clark S.Y."/>
            <person name="Clarke G."/>
            <person name="Clee C."/>
            <person name="Cobley V."/>
            <person name="Collier R.E."/>
            <person name="Corby N."/>
            <person name="Coville G.J."/>
            <person name="Davies J."/>
            <person name="Deadman R."/>
            <person name="Dunn M."/>
            <person name="Earthrowl M."/>
            <person name="Ellington A.G."/>
            <person name="Errington H."/>
            <person name="Frankish A."/>
            <person name="Frankland J."/>
            <person name="French L."/>
            <person name="Garner P."/>
            <person name="Garnett J."/>
            <person name="Gay L."/>
            <person name="Ghori M.R.J."/>
            <person name="Gibson R."/>
            <person name="Gilby L.M."/>
            <person name="Gillett W."/>
            <person name="Glithero R.J."/>
            <person name="Grafham D.V."/>
            <person name="Griffiths C."/>
            <person name="Griffiths-Jones S."/>
            <person name="Grocock R."/>
            <person name="Hammond S."/>
            <person name="Harrison E.S.I."/>
            <person name="Hart E."/>
            <person name="Haugen E."/>
            <person name="Heath P.D."/>
            <person name="Holmes S."/>
            <person name="Holt K."/>
            <person name="Howden P.J."/>
            <person name="Hunt A.R."/>
            <person name="Hunt S.E."/>
            <person name="Hunter G."/>
            <person name="Isherwood J."/>
            <person name="James R."/>
            <person name="Johnson C."/>
            <person name="Johnson D."/>
            <person name="Joy A."/>
            <person name="Kay M."/>
            <person name="Kershaw J.K."/>
            <person name="Kibukawa M."/>
            <person name="Kimberley A.M."/>
            <person name="King A."/>
            <person name="Knights A.J."/>
            <person name="Lad H."/>
            <person name="Laird G."/>
            <person name="Lawlor S."/>
            <person name="Leongamornlert D.A."/>
            <person name="Lloyd D.M."/>
            <person name="Loveland J."/>
            <person name="Lovell J."/>
            <person name="Lush M.J."/>
            <person name="Lyne R."/>
            <person name="Martin S."/>
            <person name="Mashreghi-Mohammadi M."/>
            <person name="Matthews L."/>
            <person name="Matthews N.S.W."/>
            <person name="McLaren S."/>
            <person name="Milne S."/>
            <person name="Mistry S."/>
            <person name="Moore M.J.F."/>
            <person name="Nickerson T."/>
            <person name="O'Dell C.N."/>
            <person name="Oliver K."/>
            <person name="Palmeiri A."/>
            <person name="Palmer S.A."/>
            <person name="Parker A."/>
            <person name="Patel D."/>
            <person name="Pearce A.V."/>
            <person name="Peck A.I."/>
            <person name="Pelan S."/>
            <person name="Phelps K."/>
            <person name="Phillimore B.J."/>
            <person name="Plumb R."/>
            <person name="Rajan J."/>
            <person name="Raymond C."/>
            <person name="Rouse G."/>
            <person name="Saenphimmachak C."/>
            <person name="Sehra H.K."/>
            <person name="Sheridan E."/>
            <person name="Shownkeen R."/>
            <person name="Sims S."/>
            <person name="Skuce C.D."/>
            <person name="Smith M."/>
            <person name="Steward C."/>
            <person name="Subramanian S."/>
            <person name="Sycamore N."/>
            <person name="Tracey A."/>
            <person name="Tromans A."/>
            <person name="Van Helmond Z."/>
            <person name="Wall M."/>
            <person name="Wallis J.M."/>
            <person name="White S."/>
            <person name="Whitehead S.L."/>
            <person name="Wilkinson J.E."/>
            <person name="Willey D.L."/>
            <person name="Williams H."/>
            <person name="Wilming L."/>
            <person name="Wray P.W."/>
            <person name="Wu Z."/>
            <person name="Coulson A."/>
            <person name="Vaudin M."/>
            <person name="Sulston J.E."/>
            <person name="Durbin R.M."/>
            <person name="Hubbard T."/>
            <person name="Wooster R."/>
            <person name="Dunham I."/>
            <person name="Carter N.P."/>
            <person name="McVean G."/>
            <person name="Ross M.T."/>
            <person name="Harrow J."/>
            <person name="Olson M.V."/>
            <person name="Beck S."/>
            <person name="Rogers J."/>
            <person name="Bentley D.R."/>
        </authorList>
    </citation>
    <scope>NUCLEOTIDE SEQUENCE [LARGE SCALE GENOMIC DNA]</scope>
</reference>
<reference key="5">
    <citation type="submission" date="2005-07" db="EMBL/GenBank/DDBJ databases">
        <authorList>
            <person name="Mural R.J."/>
            <person name="Istrail S."/>
            <person name="Sutton G."/>
            <person name="Florea L."/>
            <person name="Halpern A.L."/>
            <person name="Mobarry C.M."/>
            <person name="Lippert R."/>
            <person name="Walenz B."/>
            <person name="Shatkay H."/>
            <person name="Dew I."/>
            <person name="Miller J.R."/>
            <person name="Flanigan M.J."/>
            <person name="Edwards N.J."/>
            <person name="Bolanos R."/>
            <person name="Fasulo D."/>
            <person name="Halldorsson B.V."/>
            <person name="Hannenhalli S."/>
            <person name="Turner R."/>
            <person name="Yooseph S."/>
            <person name="Lu F."/>
            <person name="Nusskern D.R."/>
            <person name="Shue B.C."/>
            <person name="Zheng X.H."/>
            <person name="Zhong F."/>
            <person name="Delcher A.L."/>
            <person name="Huson D.H."/>
            <person name="Kravitz S.A."/>
            <person name="Mouchard L."/>
            <person name="Reinert K."/>
            <person name="Remington K.A."/>
            <person name="Clark A.G."/>
            <person name="Waterman M.S."/>
            <person name="Eichler E.E."/>
            <person name="Adams M.D."/>
            <person name="Hunkapiller M.W."/>
            <person name="Myers E.W."/>
            <person name="Venter J.C."/>
        </authorList>
    </citation>
    <scope>NUCLEOTIDE SEQUENCE [LARGE SCALE GENOMIC DNA]</scope>
</reference>
<reference key="6">
    <citation type="journal article" date="2004" name="Genome Res.">
        <title>The status, quality, and expansion of the NIH full-length cDNA project: the Mammalian Gene Collection (MGC).</title>
        <authorList>
            <consortium name="The MGC Project Team"/>
        </authorList>
    </citation>
    <scope>NUCLEOTIDE SEQUENCE [LARGE SCALE MRNA] (ISOFORM 1)</scope>
    <scope>NUCLEOTIDE SEQUENCE [LARGE SCALE MRNA] OF 48-251 (ISOFORM 2)</scope>
    <source>
        <tissue>Brain</tissue>
        <tissue>Colon</tissue>
        <tissue>Eye</tissue>
        <tissue>Placenta</tissue>
        <tissue>PNS</tissue>
        <tissue>Testis</tissue>
    </source>
</reference>
<reference key="7">
    <citation type="submission" date="1996-12" db="EMBL/GenBank/DDBJ databases">
        <title>Complementation of chromosomal instability in the xeroderma pigmentosum variant by a gene on human chromosome 1 with homology to S-adenosyl homocysteine hydrolase.</title>
        <authorList>
            <person name="Volpe J.P.G."/>
            <person name="McDowell M."/>
            <person name="Jostes R.F."/>
            <person name="Afzal V."/>
            <person name="Sadinski W."/>
            <person name="Trask B.J."/>
            <person name="Legerski R."/>
            <person name="Cleaver J.E."/>
        </authorList>
    </citation>
    <scope>NUCLEOTIDE SEQUENCE [MRNA] OF 16-530 (ISOFORM 1)</scope>
    <source>
        <tissue>Skin</tissue>
    </source>
</reference>
<reference key="8">
    <citation type="journal article" date="2003" name="Exp. Cell Res.">
        <title>Redifferentiation of dedifferentiated chondrocytes and chondrogenesis of human bone marrow stromal cells via chondrosphere formation with expression profiling by large-scale cDNA analysis.</title>
        <authorList>
            <person name="Imabayashi H."/>
            <person name="Mori T."/>
            <person name="Gojo S."/>
            <person name="Kiyono T."/>
            <person name="Sugiyama T."/>
            <person name="Irie R."/>
            <person name="Isogai T."/>
            <person name="Hata J."/>
            <person name="Toyama Y."/>
            <person name="Umezawa A."/>
        </authorList>
    </citation>
    <scope>NUCLEOTIDE SEQUENCE [MRNA] OF 48-164 (ISOFORM 2)</scope>
    <source>
        <tissue>Chondrocyte</tissue>
    </source>
</reference>
<reference key="9">
    <citation type="journal article" date="1995" name="Genomics">
        <title>Characterization of a large population of mRNAs from human testis.</title>
        <authorList>
            <person name="Pawlak A."/>
            <person name="Toussaint C."/>
            <person name="Levy I."/>
            <person name="Bulle F."/>
            <person name="Poyard M."/>
            <person name="Barouki R."/>
            <person name="Guellaen G."/>
        </authorList>
    </citation>
    <scope>NUCLEOTIDE SEQUENCE [MRNA] OF 48-105 (ISOFORM 2)</scope>
    <source>
        <tissue>Testis</tissue>
    </source>
</reference>
<reference key="10">
    <citation type="journal article" date="2006" name="J. Biol. Chem.">
        <title>Suppression and overexpression of adenosylhomocysteine hydrolase-like protein 1 (AHCYL1) influences zebrafish embryo development: a possible role for AHCYL1 in inositol phospholipid signaling.</title>
        <authorList>
            <person name="Cooper B.J."/>
            <person name="Key B."/>
            <person name="Carter A."/>
            <person name="Angel N.Z."/>
            <person name="Hart D.N.J."/>
            <person name="Kato M."/>
        </authorList>
    </citation>
    <scope>IDENTIFICATION (ISOFORM 2)</scope>
</reference>
<reference key="11">
    <citation type="journal article" date="2006" name="Mol. Cell">
        <title>IRBIT suppresses IP3 receptor activity by competing with IP3 for the common binding site on the IP3 receptor.</title>
        <authorList>
            <person name="Ando H."/>
            <person name="Mizutani A."/>
            <person name="Kiefer H."/>
            <person name="Tsuzurugi D."/>
            <person name="Michikawa T."/>
            <person name="Mikoshiba K."/>
        </authorList>
    </citation>
    <scope>FUNCTION</scope>
    <scope>SUBUNIT</scope>
    <scope>INTERACTION WITH ITPR1</scope>
    <scope>PHOSPHORYLATION AT SER-68 AND SER-71</scope>
    <scope>MUTAGENESIS OF SER-64; SER-66; SER-68; SER-70; SER-71; THR-72; SER-74; SER-76; SER-77; SER-80; THR-82; SER-84; SER-85; SER-90 AND THR-97</scope>
</reference>
<reference key="12">
    <citation type="journal article" date="2006" name="Proc. Natl. Acad. Sci. U.S.A.">
        <title>IRBIT, an inositol 1,4,5-trisphosphate receptor-binding protein, specifically binds to and activates pancreas-type Na+/HCO3-cotransporter 1 (pNBC1).</title>
        <authorList>
            <person name="Shirakabe K."/>
            <person name="Priori G."/>
            <person name="Yamada H."/>
            <person name="Ando H."/>
            <person name="Horita S."/>
            <person name="Fujita T."/>
            <person name="Fujimoto I."/>
            <person name="Mizutani A."/>
            <person name="Seki G."/>
            <person name="Mikoshiba K."/>
        </authorList>
    </citation>
    <scope>FUNCTION</scope>
    <scope>INTERACTION WITH SLC4A4</scope>
    <scope>MUTAGENESIS OF THR-52; THR-58; SER-62; SER-64; SER-66; SER-68; SER-70; SER-71; THR-72; SER-74; SER-76; SER-77; SER-80; THR-82; SER-84; SER-85; SER-90 AND THR-97</scope>
</reference>
<reference key="13">
    <citation type="journal article" date="2008" name="J. Biol. Chem.">
        <title>IRBIT, inositol 1,4,5-triphosphate (IP3) receptor-binding protein released with IP3, binds Na+/H+ exchanger NHE3 and activates NHE3 activity in response to calcium.</title>
        <authorList>
            <person name="He P."/>
            <person name="Zhang H."/>
            <person name="Yun C.C."/>
        </authorList>
    </citation>
    <scope>FUNCTION</scope>
    <scope>INTERACTION WITH SLC9A3</scope>
</reference>
<reference key="14">
    <citation type="journal article" date="2008" name="Proc. Natl. Acad. Sci. U.S.A.">
        <title>A quantitative atlas of mitotic phosphorylation.</title>
        <authorList>
            <person name="Dephoure N."/>
            <person name="Zhou C."/>
            <person name="Villen J."/>
            <person name="Beausoleil S.A."/>
            <person name="Bakalarski C.E."/>
            <person name="Elledge S.J."/>
            <person name="Gygi S.P."/>
        </authorList>
    </citation>
    <scope>PHOSPHORYLATION [LARGE SCALE ANALYSIS] AT SER-391</scope>
    <scope>IDENTIFICATION BY MASS SPECTROMETRY [LARGE SCALE ANALYSIS]</scope>
    <source>
        <tissue>Cervix carcinoma</tissue>
    </source>
</reference>
<reference key="15">
    <citation type="journal article" date="2009" name="J. Biol. Chem.">
        <title>Inositol 1,4,5-triphosphate receptor-binding protein released with inositol 1,4,5-triphosphate (IRBIT) associates with components of the mRNA 3' processing machinery in a phosphorylation-dependent manner and inhibits polyadenylation.</title>
        <authorList>
            <person name="Kiefer H."/>
            <person name="Mizutani A."/>
            <person name="Iemura S."/>
            <person name="Natsume T."/>
            <person name="Ando H."/>
            <person name="Kuroda Y."/>
            <person name="Mikoshiba K."/>
        </authorList>
    </citation>
    <scope>FUNCTION</scope>
    <scope>INTERACTION WITH FIP1L1 AND PAPOLA</scope>
    <scope>RNA-BINDING</scope>
    <scope>MUTAGENESIS OF SER-62; SER-64; SER-66; SER-68; SER-70; SER-71; THR-72; SER-74; SER-76; SER-77; SER-80; THR-82; SER-84; SER-85; SER-90 AND THR-97</scope>
</reference>
<reference key="16">
    <citation type="journal article" date="2009" name="J. Neurochem.">
        <title>An IRBIT homologue lacks binding activity to inositol 1,4,5-trisphosphate receptor due to the unique N-terminal appendage.</title>
        <authorList>
            <person name="Ando H."/>
            <person name="Mizutani A."/>
            <person name="Mikoshiba K."/>
        </authorList>
    </citation>
    <scope>INTERACTION WITH AHCYL2 AND ITPR1</scope>
    <scope>PHOSPHORYLATION AT SER-68; SER-71; SER-74 AND SER-77</scope>
</reference>
<reference key="17">
    <citation type="journal article" date="2010" name="J. Biol. Chem.">
        <title>Activation of Na+/H+ exchanger NHE3 by angiotensin II is mediated by inositol 1,4,5-triphosphate (IP3) receptor-binding protein released with IP3 (IRBIT) and Ca2+/calmodulin-dependent protein kinase II.</title>
        <authorList>
            <person name="He P."/>
            <person name="Klein J."/>
            <person name="Yun C.C."/>
        </authorList>
    </citation>
    <scope>FUNCTION</scope>
    <scope>INTERACTION WITH SLC9A3</scope>
    <scope>MUTAGENESIS OF SER-68; SER-71 AND SER-74</scope>
</reference>
<reference key="18">
    <citation type="journal article" date="2011" name="BMC Syst. Biol.">
        <title>Initial characterization of the human central proteome.</title>
        <authorList>
            <person name="Burkard T.R."/>
            <person name="Planyavsky M."/>
            <person name="Kaupe I."/>
            <person name="Breitwieser F.P."/>
            <person name="Buerckstuemmer T."/>
            <person name="Bennett K.L."/>
            <person name="Superti-Furga G."/>
            <person name="Colinge J."/>
        </authorList>
    </citation>
    <scope>IDENTIFICATION BY MASS SPECTROMETRY [LARGE SCALE ANALYSIS]</scope>
</reference>
<reference key="19">
    <citation type="journal article" date="2011" name="Sci. Signal.">
        <title>System-wide temporal characterization of the proteome and phosphoproteome of human embryonic stem cell differentiation.</title>
        <authorList>
            <person name="Rigbolt K.T."/>
            <person name="Prokhorova T.A."/>
            <person name="Akimov V."/>
            <person name="Henningsen J."/>
            <person name="Johansen P.T."/>
            <person name="Kratchmarova I."/>
            <person name="Kassem M."/>
            <person name="Mann M."/>
            <person name="Olsen J.V."/>
            <person name="Blagoev B."/>
        </authorList>
    </citation>
    <scope>ACETYLATION [LARGE SCALE ANALYSIS] AT SER-2</scope>
    <scope>PHOSPHORYLATION [LARGE SCALE ANALYSIS] AT SER-2</scope>
    <scope>CLEAVAGE OF INITIATOR METHIONINE [LARGE SCALE ANALYSIS]</scope>
    <scope>IDENTIFICATION BY MASS SPECTROMETRY [LARGE SCALE ANALYSIS]</scope>
</reference>
<reference key="20">
    <citation type="journal article" date="2012" name="Proc. Natl. Acad. Sci. U.S.A.">
        <title>N-terminal acetylome analyses and functional insights of the N-terminal acetyltransferase NatB.</title>
        <authorList>
            <person name="Van Damme P."/>
            <person name="Lasa M."/>
            <person name="Polevoda B."/>
            <person name="Gazquez C."/>
            <person name="Elosegui-Artola A."/>
            <person name="Kim D.S."/>
            <person name="De Juan-Pardo E."/>
            <person name="Demeyer K."/>
            <person name="Hole K."/>
            <person name="Larrea E."/>
            <person name="Timmerman E."/>
            <person name="Prieto J."/>
            <person name="Arnesen T."/>
            <person name="Sherman F."/>
            <person name="Gevaert K."/>
            <person name="Aldabe R."/>
        </authorList>
    </citation>
    <scope>ACETYLATION [LARGE SCALE ANALYSIS] AT MET-1 (ISOFORM 2)</scope>
    <scope>IDENTIFICATION BY MASS SPECTROMETRY [LARGE SCALE ANALYSIS]</scope>
</reference>
<reference key="21">
    <citation type="journal article" date="2013" name="J. Proteome Res.">
        <title>Toward a comprehensive characterization of a human cancer cell phosphoproteome.</title>
        <authorList>
            <person name="Zhou H."/>
            <person name="Di Palma S."/>
            <person name="Preisinger C."/>
            <person name="Peng M."/>
            <person name="Polat A.N."/>
            <person name="Heck A.J."/>
            <person name="Mohammed S."/>
        </authorList>
    </citation>
    <scope>PHOSPHORYLATION [LARGE SCALE ANALYSIS] AT SER-2</scope>
    <scope>IDENTIFICATION BY MASS SPECTROMETRY [LARGE SCALE ANALYSIS]</scope>
    <source>
        <tissue>Erythroleukemia</tissue>
    </source>
</reference>
<reference key="22">
    <citation type="journal article" date="2016" name="Elife">
        <title>IRBIT controls apoptosis by interacting with the Bcl-2 homolog, Bcl2l10, and by promoting ER-mitochondria contact.</title>
        <authorList>
            <person name="Bonneau B."/>
            <person name="Ando H."/>
            <person name="Kawaai K."/>
            <person name="Hirose M."/>
            <person name="Takahashi-Iwanaga H."/>
            <person name="Mikoshiba K."/>
        </authorList>
    </citation>
    <scope>FUNCTION</scope>
    <scope>INTERACTION WITH BCL2L10 AND ITPR1</scope>
    <scope>SUBCELLULAR LOCATION</scope>
    <scope>PHOSPHORYLATION AT SER-68; SER-71; SER-74 AND SER-77</scope>
    <scope>DEPHOSPHORYLATION</scope>
    <scope>MUTAGENESIS OF SER-68</scope>
</reference>
<reference key="23">
    <citation type="journal article" date="2020" name="Nucleic Acids Res.">
        <title>The human methyltransferase ZCCHC4 catalyses N6-methyladenosine modification of 28S ribosomal RNA.</title>
        <authorList>
            <person name="Pinto R."/>
            <person name="Vaagboe C.B."/>
            <person name="Jakobsson M.E."/>
            <person name="Kim Y."/>
            <person name="Baltissen M.P."/>
            <person name="O'Donohue M.F."/>
            <person name="Guzman U.H."/>
            <person name="Malecki J.M."/>
            <person name="Wu J."/>
            <person name="Kirpekar F."/>
            <person name="Olsen J.V."/>
            <person name="Gleizes P.E."/>
            <person name="Vermeulen M."/>
            <person name="Leidel S.A."/>
            <person name="Slupphaug G."/>
            <person name="Falnes P.O."/>
        </authorList>
    </citation>
    <scope>INTERACTION WITH ZCCHC4</scope>
</reference>
<reference key="24">
    <citation type="journal article" date="2017" name="Eur. J. Cell Biol.">
        <title>Mutations in S-adenosylhomocysteine hydrolase (AHCY) affect its nucleocytoplasmic distribution and capability to interact with S-adenosylhomocysteine hydrolase-like 1 protein.</title>
        <authorList>
            <person name="Grbesa I."/>
            <person name="Kalo A."/>
            <person name="Beluzic R."/>
            <person name="Kovacevic L."/>
            <person name="Lepur A."/>
            <person name="Rokic F."/>
            <person name="Hochberg H."/>
            <person name="Kanter I."/>
            <person name="Simunovic V."/>
            <person name="Munoz-Torres P.M."/>
            <person name="Shav-Tal Y."/>
            <person name="Vugrek O."/>
        </authorList>
    </citation>
    <scope>SUBCELLULAR LOCATION</scope>
    <scope>INTERACTION WITH AHCY</scope>
</reference>
<reference key="25">
    <citation type="journal article" date="2014" name="Science">
        <title>Enzyme regulation. IRBIT is a novel regulator of ribonucleotide reductase in higher eukaryotes.</title>
        <authorList>
            <person name="Arnaoutov A."/>
            <person name="Dasso M."/>
        </authorList>
    </citation>
    <scope>X-RAY CRYSTALLOGRAPHY (2.64 ANGSTROMS) OF 89-530 OF MUTANT ALA-508 IN COMPLEX WITH NAD</scope>
    <scope>COFACTOR</scope>
    <scope>FUNCTION</scope>
    <scope>INTERACTION WITH RRM1</scope>
    <scope>MISCELLANEOUS</scope>
    <scope>PEST REGION</scope>
    <scope>PHOSPHORYLATION</scope>
</reference>
<comment type="function">
    <text evidence="2 3 6 7 8 10 11 12 13">Multifaceted cellular regulator which coordinates several essential cellular functions including regulation of epithelial HCO3(-) and fluid secretion, mRNA processing and DNA replication. Regulates ITPR1 sensitivity to inositol 1,4,5-trisphosphate, competing for the common binding site and acting as endogenous 'pseudoligand' whose inhibitory activity can be modulated by its phosphorylation status. Promotes the formation of contact points between the endoplasmic reticulum (ER) and mitochondria, facilitating transfer of Ca(2+) from the ER to mitochondria (PubMed:27995898). Under normal cellular conditions, functions cooperatively with BCL2L10 to limit ITPR1-mediated Ca(2+) release but, under apoptotic stress conditions, dephosphorylated which promotes dissociation of both AHCYL1 and BCL2L10 from mitochondria-associated endoplasmic reticulum membranes, inhibits BCL2L10 interaction with ITPR1 and leads to increased Ca(2+) transfer to mitochondria which promotes apoptosis (PubMed:27995898). In the pancreatic and salivary ducts, at resting state, attenuates inositol 1,4,5-trisphosphate-induced calcium release by interacting with ITPR1 (PubMed:16793548). When extracellular stimuli induce ITPR1 phosphorylation or inositol 1,4,5-trisphosphate production, dissociates from ITPR1 to interact with CFTR and SLC26A6, mediating their synergistic activation by calcium and cAMP that stimulates the epithelial secretion of electrolytes and fluid (By similarity). Also activates basolateral SLC4A4 isoform 1 to coordinate fluid and HCO3(-) secretion (PubMed:16769890). Inhibits the effect of STK39 on SLC4A4 and CFTR by recruiting PP1 phosphatase which activates SLC4A4, SLC26A6 and CFTR through dephosphorylation (By similarity). Mediates the induction of SLC9A3 surface expression produced by Angiotensin-2 (PubMed:20584908). Depending on the cell type, activates SLC9A3 in response to calcium or reverses SLC9A3R2-dependent calcium inhibition (PubMed:18829453). May modulate the polyadenylation state of specific mRNAs, both by controlling the subcellular location of FIP1L1 and by inhibiting PAPOLA activity, in response to a stimulus that alters its phosphorylation state (PubMed:19224921). Acts as a (dATP)-dependent inhibitor of ribonucleotide reductase large subunit RRM1, controlling the endogenous dNTP pool and ensuring normal cell cycle progression (PubMed:25237103). In vitro does not exhibit any S-adenosyl-L-homocysteine hydrolase activity (By similarity).</text>
</comment>
<comment type="cofactor">
    <cofactor evidence="12">
        <name>NAD(+)</name>
        <dbReference type="ChEBI" id="CHEBI:57540"/>
    </cofactor>
    <text evidence="12">Binds 1 NAD(+) per subunit.</text>
</comment>
<comment type="subunit">
    <text evidence="2 3 6 7 8 9 10 11 12 13 14 15">Forms multimers (PubMed:16793548). Forms heteromultimers with AHCYL2 (via the C-terminal region) (PubMed:19220705). Interacts (when phosphorylated) with ITPR1 (when not phosphorylated); the interaction suppresses inositol 1,4,5-trisphosphate binding to ITPR1 (PubMed:16793548, PubMed:27995898). Interacts with BCL2L10; this strengthens the interaction of AHCYL1 with ITPR1 (PubMed:27995898). Interacts with CFTR and SLC26A6; the interactions take place once AHCYL1 is released from ITPR1 and increase CFTR and SLC26A6 activities (By similarity). Interacts with RRM1; in a phosphorylation- and (dATP)-dependent manner. Interacts (via PEST domain when phosphorylated) with SLC4A4 isoform 1 but not isoform 2; the interaction increases SLC4A4 isoform 1 activity (PubMed:16769890). Interacts (when phosphorylated) with SLC9A3; the interaction is required for SLC9A3 apical location and activity (PubMed:18829453, PubMed:20584908). Interacts (when phosphorylated) with FIP1L1; the interaction is direct and associates AHCYL1 with the CPSF complex and RNA (PubMed:19224921). Interacts with PAPOLA (PubMed:19224921). Interacts with ZCCHC4 (PubMed:31799605). Interacts with AHCY (PubMed:28647132).</text>
</comment>
<comment type="interaction">
    <interactant intactId="EBI-2371423">
        <id>O43865</id>
    </interactant>
    <interactant intactId="EBI-2371423">
        <id>O43865</id>
        <label>AHCYL1</label>
    </interactant>
    <organismsDiffer>false</organismsDiffer>
    <experiments>5</experiments>
</comment>
<comment type="interaction">
    <interactant intactId="EBI-2371423">
        <id>O43865</id>
    </interactant>
    <interactant intactId="EBI-2126349">
        <id>Q9HD36</id>
        <label>BCL2L10</label>
    </interactant>
    <organismsDiffer>false</organismsDiffer>
    <experiments>4</experiments>
</comment>
<comment type="interaction">
    <interactant intactId="EBI-2371423">
        <id>O43865</id>
    </interactant>
    <interactant intactId="EBI-519672">
        <id>P55957</id>
        <label>BID</label>
    </interactant>
    <organismsDiffer>false</organismsDiffer>
    <experiments>3</experiments>
</comment>
<comment type="interaction">
    <interactant intactId="EBI-2371423">
        <id>O43865</id>
    </interactant>
    <interactant intactId="EBI-10215147">
        <id>P55957-2</id>
        <label>BID</label>
    </interactant>
    <organismsDiffer>false</organismsDiffer>
    <experiments>3</experiments>
</comment>
<comment type="interaction">
    <interactant intactId="EBI-2371423">
        <id>O43865</id>
    </interactant>
    <interactant intactId="EBI-711290">
        <id>P42773</id>
        <label>CDKN2C</label>
    </interactant>
    <organismsDiffer>false</organismsDiffer>
    <experiments>10</experiments>
</comment>
<comment type="interaction">
    <interactant intactId="EBI-2371423">
        <id>O43865</id>
    </interactant>
    <interactant intactId="EBI-349854">
        <id>P13569</id>
        <label>CFTR</label>
    </interactant>
    <organismsDiffer>false</organismsDiffer>
    <experiments>7</experiments>
</comment>
<comment type="interaction">
    <interactant intactId="EBI-2371423">
        <id>O43865</id>
    </interactant>
    <interactant intactId="EBI-10186082">
        <id>Q9UI36-2</id>
        <label>DACH1</label>
    </interactant>
    <organismsDiffer>false</organismsDiffer>
    <experiments>10</experiments>
</comment>
<comment type="interaction">
    <interactant intactId="EBI-2371423">
        <id>O43865</id>
    </interactant>
    <interactant intactId="EBI-744104">
        <id>P55040</id>
        <label>GEM</label>
    </interactant>
    <organismsDiffer>false</organismsDiffer>
    <experiments>8</experiments>
</comment>
<comment type="interaction">
    <interactant intactId="EBI-2371423">
        <id>O43865</id>
    </interactant>
    <interactant intactId="EBI-10193656">
        <id>P09105</id>
        <label>HBQ1</label>
    </interactant>
    <organismsDiffer>false</organismsDiffer>
    <experiments>6</experiments>
</comment>
<comment type="interaction">
    <interactant intactId="EBI-2371423">
        <id>O43865</id>
    </interactant>
    <interactant intactId="EBI-5460660">
        <id>Q96MH2</id>
        <label>HEXIM2</label>
    </interactant>
    <organismsDiffer>false</organismsDiffer>
    <experiments>6</experiments>
</comment>
<comment type="interaction">
    <interactant intactId="EBI-2371423">
        <id>O43865</id>
    </interactant>
    <interactant intactId="EBI-355106">
        <id>P17066</id>
        <label>HSPA6</label>
    </interactant>
    <organismsDiffer>false</organismsDiffer>
    <experiments>3</experiments>
</comment>
<comment type="interaction">
    <interactant intactId="EBI-2371423">
        <id>O43865</id>
    </interactant>
    <interactant intactId="EBI-465548">
        <id>Q14643</id>
        <label>ITPR1</label>
    </interactant>
    <organismsDiffer>false</organismsDiffer>
    <experiments>3</experiments>
</comment>
<comment type="interaction">
    <interactant intactId="EBI-2371423">
        <id>O43865</id>
    </interactant>
    <interactant intactId="EBI-12205593">
        <id>Q8TAC2</id>
        <label>JOSD2</label>
    </interactant>
    <organismsDiffer>false</organismsDiffer>
    <experiments>5</experiments>
</comment>
<comment type="interaction">
    <interactant intactId="EBI-2371423">
        <id>O43865</id>
    </interactant>
    <interactant intactId="EBI-5323863">
        <id>Q5S007</id>
        <label>LRRK2</label>
    </interactant>
    <organismsDiffer>false</organismsDiffer>
    <experiments>3</experiments>
</comment>
<comment type="interaction">
    <interactant intactId="EBI-2371423">
        <id>O43865</id>
    </interactant>
    <interactant intactId="EBI-5650739">
        <id>P43356</id>
        <label>MAGEA2B</label>
    </interactant>
    <organismsDiffer>false</organismsDiffer>
    <experiments>3</experiments>
</comment>
<comment type="interaction">
    <interactant intactId="EBI-2371423">
        <id>O43865</id>
    </interactant>
    <interactant intactId="EBI-748397">
        <id>P50222</id>
        <label>MEOX2</label>
    </interactant>
    <organismsDiffer>false</organismsDiffer>
    <experiments>3</experiments>
</comment>
<comment type="interaction">
    <interactant intactId="EBI-2371423">
        <id>O43865</id>
    </interactant>
    <interactant intactId="EBI-744790">
        <id>Q8NCR3</id>
        <label>MFI</label>
    </interactant>
    <organismsDiffer>false</organismsDiffer>
    <experiments>3</experiments>
</comment>
<comment type="interaction">
    <interactant intactId="EBI-2371423">
        <id>O43865</id>
    </interactant>
    <interactant intactId="EBI-25834085">
        <id>Q8N323</id>
        <label>NXPE1</label>
    </interactant>
    <organismsDiffer>false</organismsDiffer>
    <experiments>3</experiments>
</comment>
<comment type="interaction">
    <interactant intactId="EBI-2371423">
        <id>O43865</id>
    </interactant>
    <interactant intactId="EBI-473160">
        <id>Q8N2W9</id>
        <label>PIAS4</label>
    </interactant>
    <organismsDiffer>false</organismsDiffer>
    <experiments>3</experiments>
</comment>
<comment type="interaction">
    <interactant intactId="EBI-2371423">
        <id>O43865</id>
    </interactant>
    <interactant intactId="EBI-11980215">
        <id>O94827-4</id>
        <label>PLEKHG5</label>
    </interactant>
    <organismsDiffer>false</organismsDiffer>
    <experiments>3</experiments>
</comment>
<comment type="interaction">
    <interactant intactId="EBI-2371423">
        <id>O43865</id>
    </interactant>
    <interactant intactId="EBI-2931238">
        <id>O14829</id>
        <label>PPEF1</label>
    </interactant>
    <organismsDiffer>false</organismsDiffer>
    <experiments>3</experiments>
</comment>
<comment type="interaction">
    <interactant intactId="EBI-2371423">
        <id>O43865</id>
    </interactant>
    <interactant intactId="EBI-368321">
        <id>O60437</id>
        <label>PPL</label>
    </interactant>
    <organismsDiffer>false</organismsDiffer>
    <experiments>3</experiments>
</comment>
<comment type="interaction">
    <interactant intactId="EBI-2371423">
        <id>O43865</id>
    </interactant>
    <interactant intactId="EBI-11320284">
        <id>Q9NQX0</id>
        <label>PRDM6</label>
    </interactant>
    <organismsDiffer>false</organismsDiffer>
    <experiments>3</experiments>
</comment>
<comment type="interaction">
    <interactant intactId="EBI-2371423">
        <id>O43865</id>
    </interactant>
    <interactant intactId="EBI-750973">
        <id>O00233</id>
        <label>PSMD9</label>
    </interactant>
    <organismsDiffer>false</organismsDiffer>
    <experiments>3</experiments>
</comment>
<comment type="interaction">
    <interactant intactId="EBI-2371423">
        <id>O43865</id>
    </interactant>
    <interactant intactId="EBI-16428950">
        <id>A0A0S2Z4G9</id>
        <label>RNF6</label>
    </interactant>
    <organismsDiffer>false</organismsDiffer>
    <experiments>3</experiments>
</comment>
<comment type="interaction">
    <interactant intactId="EBI-2371423">
        <id>O43865</id>
    </interactant>
    <interactant intactId="EBI-1759386">
        <id>Q9UHI7</id>
        <label>SLC23A1</label>
    </interactant>
    <organismsDiffer>false</organismsDiffer>
    <experiments>3</experiments>
</comment>
<comment type="interaction">
    <interactant intactId="EBI-2371423">
        <id>O43865</id>
    </interactant>
    <interactant intactId="EBI-11998660">
        <id>Q9UHI7-3</id>
        <label>SLC23A1</label>
    </interactant>
    <organismsDiffer>false</organismsDiffer>
    <experiments>3</experiments>
</comment>
<comment type="interaction">
    <interactant intactId="EBI-2371423">
        <id>O43865</id>
    </interactant>
    <interactant intactId="EBI-359174">
        <id>Q02978</id>
        <label>SLC25A11</label>
    </interactant>
    <organismsDiffer>false</organismsDiffer>
    <experiments>3</experiments>
</comment>
<comment type="interaction">
    <interactant intactId="EBI-2371423">
        <id>O43865</id>
    </interactant>
    <interactant intactId="EBI-742973">
        <id>O94993</id>
        <label>SOX30</label>
    </interactant>
    <organismsDiffer>false</organismsDiffer>
    <experiments>3</experiments>
</comment>
<comment type="interaction">
    <interactant intactId="EBI-2371423">
        <id>O43865</id>
    </interactant>
    <interactant intactId="EBI-743494">
        <id>P48775</id>
        <label>TDO2</label>
    </interactant>
    <organismsDiffer>false</organismsDiffer>
    <experiments>3</experiments>
</comment>
<comment type="interaction">
    <interactant intactId="EBI-2371423">
        <id>O43865</id>
    </interactant>
    <interactant intactId="EBI-350510">
        <id>Q9BZF9</id>
        <label>UACA</label>
    </interactant>
    <organismsDiffer>false</organismsDiffer>
    <experiments>3</experiments>
</comment>
<comment type="interaction">
    <interactant intactId="EBI-2371423">
        <id>O43865</id>
    </interactant>
    <interactant intactId="EBI-741694">
        <id>P49910</id>
        <label>ZNF165</label>
    </interactant>
    <organismsDiffer>false</organismsDiffer>
    <experiments>3</experiments>
</comment>
<comment type="interaction">
    <interactant intactId="EBI-2371423">
        <id>O43865</id>
    </interactant>
    <interactant intactId="EBI-10186058">
        <id>Q53Z40</id>
        <label>ZNF165</label>
    </interactant>
    <organismsDiffer>false</organismsDiffer>
    <experiments>5</experiments>
</comment>
<comment type="interaction">
    <interactant intactId="EBI-2371423">
        <id>O43865</id>
    </interactant>
    <interactant intactId="EBI-6164389">
        <id>P04608</id>
        <label>tat</label>
    </interactant>
    <organismsDiffer>true</organismsDiffer>
    <experiments>5</experiments>
</comment>
<comment type="subcellular location">
    <subcellularLocation>
        <location evidence="13 14">Endoplasmic reticulum</location>
    </subcellularLocation>
    <subcellularLocation>
        <location evidence="13">Cytoplasm</location>
        <location evidence="13">Cytosol</location>
    </subcellularLocation>
    <subcellularLocation>
        <location evidence="2">Apical cell membrane</location>
        <topology evidence="21">Peripheral membrane protein</topology>
    </subcellularLocation>
    <subcellularLocation>
        <location evidence="3">Microsome</location>
    </subcellularLocation>
    <text evidence="3 13">Associates with membranes when phosphorylated, probably through interaction with ITPR1 (By similarity). Localizes to mitochondria-associated endoplasmic reticulum membranes (MAMs) (PubMed:27995898). Localization to MAMs is greatly reduced under apoptotic stress conditions (PubMed:27995898).</text>
</comment>
<comment type="alternative products">
    <event type="alternative splicing"/>
    <isoform>
        <id>O43865-1</id>
        <name>1</name>
        <sequence type="displayed"/>
    </isoform>
    <isoform>
        <id>O43865-2</id>
        <name>2</name>
        <sequence type="described" ref="VSP_021751"/>
    </isoform>
</comment>
<comment type="tissue specificity">
    <text evidence="5">Expressed in dendritic cells.</text>
</comment>
<comment type="developmental stage">
    <text evidence="5">Expression increases markedly during activation of blood and skin DC (Langerhans cells), but is diminished in terminally differentiated tonsil DC.</text>
</comment>
<comment type="domain">
    <text evidence="3 12">The PEST region is essential for the interaction with ITPR1, and, when phosphorylated, is also the RRM1-binding region. The PDZ-binding region is required for maximal interaction with ITPR1 and is also responsible for the IP3-insensitive interaction with ITPR1 (By similarity).</text>
</comment>
<comment type="PTM">
    <text evidence="7 10 12 13 24">Phosphorylated at Ser/Thr residues between Ser-68 and Thr-72 in the PEST region: required for interaction with dATP-bound RRM1 and ITPR1. Phosphorylation at Ser-68 by PRKD1 and CAMK4 is required for further phosphorylations by CSNK1A1 (PubMed:16793548). Phosphorylation is induced by oxidative stress (PubMed:19224921). Probably phosphorylated by CAMK2A; phosphorylation at Ser-68 may be required for interaction with SLC9A3 (PubMed:20584908). Dephosphorylated in response to apoptotic stress conditions which causes translocation of both AHCYL1 and BCL2L10 from mitochondria-associated endoplasmic reticulum membranes and promotes apoptosis (PubMed:27995898).</text>
</comment>
<comment type="miscellaneous">
    <text evidence="12">Ablation of expression in HeLa cells causes imbalanced dNTP pools and altered cell cycle progression.</text>
</comment>
<comment type="similarity">
    <text evidence="21">Belongs to the adenosylhomocysteinase family.</text>
</comment>
<comment type="caution">
    <text evidence="3">In spite of its similarity with AHCY, which catalyzes the reversible hydrolysis of S-adenosyl-L-homocysteine to adenosine and homocysteine, recombinant AHCYL1 expressed in bacteria shows no hydrolase activity, nor does it affect the enzyme activity of AHCY.</text>
</comment>
<comment type="sequence caution" evidence="21">
    <conflict type="erroneous initiation">
        <sequence resource="EMBL-CDS" id="AAC01960"/>
    </conflict>
    <text>Truncated N-terminus.</text>
</comment>
<comment type="sequence caution" evidence="21">
    <conflict type="frameshift">
        <sequence resource="EMBL" id="BI460083"/>
    </conflict>
</comment>
<comment type="sequence caution" evidence="21">
    <conflict type="erroneous initiation">
        <sequence resource="EMBL-CDS" id="CAB43223"/>
    </conflict>
    <text>Extended N-terminus.</text>
</comment>
<protein>
    <recommendedName>
        <fullName evidence="25">S-adenosylhomocysteine hydrolase-like protein 1</fullName>
    </recommendedName>
    <alternativeName>
        <fullName>DC-expressed AHCY-like molecule</fullName>
    </alternativeName>
    <alternativeName>
        <fullName>IP(3)Rs binding protein released with IP(3)</fullName>
        <shortName>IRBIT</shortName>
    </alternativeName>
    <alternativeName>
        <fullName>Putative adenosylhomocysteinase 2</fullName>
    </alternativeName>
    <alternativeName>
        <fullName>S-adenosyl-L-homocysteine hydrolase 2</fullName>
        <shortName>AdoHcyase 2</shortName>
    </alternativeName>
</protein>
<dbReference type="EMBL" id="AF315687">
    <property type="protein sequence ID" value="AAL26869.1"/>
    <property type="molecule type" value="mRNA"/>
</dbReference>
<dbReference type="EMBL" id="AL036027">
    <property type="status" value="NOT_ANNOTATED_CDS"/>
    <property type="molecule type" value="mRNA"/>
</dbReference>
<dbReference type="EMBL" id="AK303690">
    <property type="protein sequence ID" value="BAG64680.1"/>
    <property type="molecule type" value="mRNA"/>
</dbReference>
<dbReference type="EMBL" id="AK316110">
    <property type="protein sequence ID" value="BAH14481.1"/>
    <property type="molecule type" value="mRNA"/>
</dbReference>
<dbReference type="EMBL" id="AL049954">
    <property type="protein sequence ID" value="CAB43223.2"/>
    <property type="status" value="ALT_INIT"/>
    <property type="molecule type" value="mRNA"/>
</dbReference>
<dbReference type="EMBL" id="AL772411">
    <property type="protein sequence ID" value="CAH70965.1"/>
    <property type="molecule type" value="Genomic_DNA"/>
</dbReference>
<dbReference type="EMBL" id="AL772411">
    <property type="protein sequence ID" value="CAH70966.1"/>
    <property type="molecule type" value="Genomic_DNA"/>
</dbReference>
<dbReference type="EMBL" id="CH471122">
    <property type="protein sequence ID" value="EAW56426.1"/>
    <property type="molecule type" value="Genomic_DNA"/>
</dbReference>
<dbReference type="EMBL" id="BC007576">
    <property type="protein sequence ID" value="AAH07576.3"/>
    <property type="molecule type" value="mRNA"/>
</dbReference>
<dbReference type="EMBL" id="BC010681">
    <property type="protein sequence ID" value="AAH10681.3"/>
    <property type="molecule type" value="mRNA"/>
</dbReference>
<dbReference type="EMBL" id="BC016942">
    <property type="protein sequence ID" value="AAH16942.3"/>
    <property type="molecule type" value="mRNA"/>
</dbReference>
<dbReference type="EMBL" id="BC065254">
    <property type="protein sequence ID" value="AAH65254.2"/>
    <property type="molecule type" value="mRNA"/>
</dbReference>
<dbReference type="EMBL" id="BC095476">
    <property type="protein sequence ID" value="AAH95476.2"/>
    <property type="molecule type" value="mRNA"/>
</dbReference>
<dbReference type="EMBL" id="BC110896">
    <property type="protein sequence ID" value="AAI10897.2"/>
    <property type="molecule type" value="mRNA"/>
</dbReference>
<dbReference type="EMBL" id="BI460083">
    <property type="status" value="NOT_ANNOTATED_CDS"/>
    <property type="molecule type" value="mRNA"/>
</dbReference>
<dbReference type="EMBL" id="U82761">
    <property type="protein sequence ID" value="AAC01960.1"/>
    <property type="status" value="ALT_INIT"/>
    <property type="molecule type" value="mRNA"/>
</dbReference>
<dbReference type="EMBL" id="AU279527">
    <property type="status" value="NOT_ANNOTATED_CDS"/>
    <property type="molecule type" value="mRNA"/>
</dbReference>
<dbReference type="EMBL" id="T19009">
    <property type="status" value="NOT_ANNOTATED_CDS"/>
    <property type="molecule type" value="mRNA"/>
</dbReference>
<dbReference type="EMBL" id="BK005418">
    <property type="protein sequence ID" value="DAA05763.1"/>
    <property type="molecule type" value="mRNA"/>
</dbReference>
<dbReference type="EMBL" id="BK005417">
    <property type="protein sequence ID" value="DAA05762.1"/>
    <property type="molecule type" value="mRNA"/>
</dbReference>
<dbReference type="CCDS" id="CCDS55620.1">
    <molecule id="O43865-2"/>
</dbReference>
<dbReference type="CCDS" id="CCDS818.1">
    <molecule id="O43865-1"/>
</dbReference>
<dbReference type="PIR" id="T08681">
    <property type="entry name" value="T08681"/>
</dbReference>
<dbReference type="RefSeq" id="NP_001229602.1">
    <molecule id="O43865-2"/>
    <property type="nucleotide sequence ID" value="NM_001242673.2"/>
</dbReference>
<dbReference type="RefSeq" id="NP_001229603.1">
    <molecule id="O43865-2"/>
    <property type="nucleotide sequence ID" value="NM_001242674.2"/>
</dbReference>
<dbReference type="RefSeq" id="NP_001229604.1">
    <molecule id="O43865-2"/>
    <property type="nucleotide sequence ID" value="NM_001242675.2"/>
</dbReference>
<dbReference type="RefSeq" id="NP_001229605.1">
    <molecule id="O43865-2"/>
    <property type="nucleotide sequence ID" value="NM_001242676.2"/>
</dbReference>
<dbReference type="RefSeq" id="NP_006612.2">
    <molecule id="O43865-1"/>
    <property type="nucleotide sequence ID" value="NM_006621.5"/>
</dbReference>
<dbReference type="PDB" id="3MTG">
    <property type="method" value="X-ray"/>
    <property type="resolution" value="2.64 A"/>
    <property type="chains" value="A/B=89-530"/>
</dbReference>
<dbReference type="PDBsum" id="3MTG"/>
<dbReference type="SMR" id="O43865"/>
<dbReference type="BioGRID" id="115987">
    <property type="interactions" value="397"/>
</dbReference>
<dbReference type="CORUM" id="O43865"/>
<dbReference type="FunCoup" id="O43865">
    <property type="interactions" value="988"/>
</dbReference>
<dbReference type="IntAct" id="O43865">
    <property type="interactions" value="156"/>
</dbReference>
<dbReference type="MINT" id="O43865"/>
<dbReference type="STRING" id="9606.ENSP00000358814"/>
<dbReference type="BindingDB" id="O43865"/>
<dbReference type="ChEMBL" id="CHEMBL3751646"/>
<dbReference type="GlyGen" id="O43865">
    <property type="glycosylation" value="2 sites, 1 N-linked glycan (1 site), 1 O-linked glycan (1 site)"/>
</dbReference>
<dbReference type="iPTMnet" id="O43865"/>
<dbReference type="MetOSite" id="O43865"/>
<dbReference type="PhosphoSitePlus" id="O43865"/>
<dbReference type="SwissPalm" id="O43865"/>
<dbReference type="BioMuta" id="AHCYL1"/>
<dbReference type="jPOST" id="O43865"/>
<dbReference type="MassIVE" id="O43865"/>
<dbReference type="PaxDb" id="9606-ENSP00000358814"/>
<dbReference type="PeptideAtlas" id="O43865"/>
<dbReference type="ProteomicsDB" id="49211">
    <molecule id="O43865-1"/>
</dbReference>
<dbReference type="ProteomicsDB" id="49212">
    <molecule id="O43865-2"/>
</dbReference>
<dbReference type="Pumba" id="O43865"/>
<dbReference type="Antibodypedia" id="33777">
    <property type="antibodies" value="190 antibodies from 29 providers"/>
</dbReference>
<dbReference type="DNASU" id="10768"/>
<dbReference type="Ensembl" id="ENST00000359172.3">
    <molecule id="O43865-2"/>
    <property type="protein sequence ID" value="ENSP00000352092.3"/>
    <property type="gene ID" value="ENSG00000168710.18"/>
</dbReference>
<dbReference type="Ensembl" id="ENST00000369799.10">
    <molecule id="O43865-1"/>
    <property type="protein sequence ID" value="ENSP00000358814.5"/>
    <property type="gene ID" value="ENSG00000168710.18"/>
</dbReference>
<dbReference type="Ensembl" id="ENST00000393614.8">
    <molecule id="O43865-2"/>
    <property type="protein sequence ID" value="ENSP00000377238.4"/>
    <property type="gene ID" value="ENSG00000168710.18"/>
</dbReference>
<dbReference type="GeneID" id="10768"/>
<dbReference type="KEGG" id="hsa:10768"/>
<dbReference type="MANE-Select" id="ENST00000369799.10">
    <property type="protein sequence ID" value="ENSP00000358814.5"/>
    <property type="RefSeq nucleotide sequence ID" value="NM_006621.7"/>
    <property type="RefSeq protein sequence ID" value="NP_006612.2"/>
</dbReference>
<dbReference type="UCSC" id="uc001dyx.4">
    <molecule id="O43865-1"/>
    <property type="organism name" value="human"/>
</dbReference>
<dbReference type="AGR" id="HGNC:344"/>
<dbReference type="CTD" id="10768"/>
<dbReference type="DisGeNET" id="10768"/>
<dbReference type="GeneCards" id="AHCYL1"/>
<dbReference type="HGNC" id="HGNC:344">
    <property type="gene designation" value="AHCYL1"/>
</dbReference>
<dbReference type="HPA" id="ENSG00000168710">
    <property type="expression patterns" value="Low tissue specificity"/>
</dbReference>
<dbReference type="MIM" id="607826">
    <property type="type" value="gene"/>
</dbReference>
<dbReference type="neXtProt" id="NX_O43865"/>
<dbReference type="OpenTargets" id="ENSG00000168710"/>
<dbReference type="PharmGKB" id="PA24637"/>
<dbReference type="VEuPathDB" id="HostDB:ENSG00000168710"/>
<dbReference type="eggNOG" id="KOG1370">
    <property type="taxonomic scope" value="Eukaryota"/>
</dbReference>
<dbReference type="GeneTree" id="ENSGT00950000182981"/>
<dbReference type="HOGENOM" id="CLU_025194_2_1_1"/>
<dbReference type="InParanoid" id="O43865"/>
<dbReference type="OMA" id="QPTHLCE"/>
<dbReference type="OrthoDB" id="10007170at2759"/>
<dbReference type="PAN-GO" id="O43865">
    <property type="GO annotations" value="2 GO annotations based on evolutionary models"/>
</dbReference>
<dbReference type="PhylomeDB" id="O43865"/>
<dbReference type="TreeFam" id="TF300415"/>
<dbReference type="PathwayCommons" id="O43865"/>
<dbReference type="Reactome" id="R-HSA-112043">
    <property type="pathway name" value="PLC beta mediated events"/>
</dbReference>
<dbReference type="Reactome" id="R-HSA-1489509">
    <property type="pathway name" value="DAG and IP3 signaling"/>
</dbReference>
<dbReference type="Reactome" id="R-HSA-2029485">
    <property type="pathway name" value="Role of phospholipids in phagocytosis"/>
</dbReference>
<dbReference type="Reactome" id="R-HSA-2871809">
    <property type="pathway name" value="FCERI mediated Ca+2 mobilization"/>
</dbReference>
<dbReference type="Reactome" id="R-HSA-422356">
    <property type="pathway name" value="Regulation of insulin secretion"/>
</dbReference>
<dbReference type="Reactome" id="R-HSA-5218921">
    <property type="pathway name" value="VEGFR2 mediated cell proliferation"/>
</dbReference>
<dbReference type="Reactome" id="R-HSA-5578775">
    <property type="pathway name" value="Ion homeostasis"/>
</dbReference>
<dbReference type="Reactome" id="R-HSA-5607763">
    <property type="pathway name" value="CLEC7A (Dectin-1) induces NFAT activation"/>
</dbReference>
<dbReference type="Reactome" id="R-HSA-9664323">
    <property type="pathway name" value="FCGR3A-mediated IL10 synthesis"/>
</dbReference>
<dbReference type="Reactome" id="R-HSA-983695">
    <property type="pathway name" value="Antigen activates B Cell Receptor (BCR) leading to generation of second messengers"/>
</dbReference>
<dbReference type="SignaLink" id="O43865"/>
<dbReference type="SIGNOR" id="O43865"/>
<dbReference type="BioGRID-ORCS" id="10768">
    <property type="hits" value="276 hits in 1159 CRISPR screens"/>
</dbReference>
<dbReference type="CD-CODE" id="FB4E32DD">
    <property type="entry name" value="Presynaptic clusters and postsynaptic densities"/>
</dbReference>
<dbReference type="ChiTaRS" id="AHCYL1">
    <property type="organism name" value="human"/>
</dbReference>
<dbReference type="EvolutionaryTrace" id="O43865"/>
<dbReference type="GeneWiki" id="AHCYL1"/>
<dbReference type="GenomeRNAi" id="10768"/>
<dbReference type="Pharos" id="O43865">
    <property type="development level" value="Tchem"/>
</dbReference>
<dbReference type="PRO" id="PR:O43865"/>
<dbReference type="Proteomes" id="UP000005640">
    <property type="component" value="Chromosome 1"/>
</dbReference>
<dbReference type="RNAct" id="O43865">
    <property type="molecule type" value="protein"/>
</dbReference>
<dbReference type="Bgee" id="ENSG00000168710">
    <property type="expression patterns" value="Expressed in lateral globus pallidus and 220 other cell types or tissues"/>
</dbReference>
<dbReference type="ExpressionAtlas" id="O43865">
    <property type="expression patterns" value="baseline and differential"/>
</dbReference>
<dbReference type="GO" id="GO:0016324">
    <property type="term" value="C:apical plasma membrane"/>
    <property type="evidence" value="ECO:0000250"/>
    <property type="project" value="UniProtKB"/>
</dbReference>
<dbReference type="GO" id="GO:0005737">
    <property type="term" value="C:cytoplasm"/>
    <property type="evidence" value="ECO:0000250"/>
    <property type="project" value="UniProtKB"/>
</dbReference>
<dbReference type="GO" id="GO:0005829">
    <property type="term" value="C:cytosol"/>
    <property type="evidence" value="ECO:0000318"/>
    <property type="project" value="GO_Central"/>
</dbReference>
<dbReference type="GO" id="GO:0005789">
    <property type="term" value="C:endoplasmic reticulum membrane"/>
    <property type="evidence" value="ECO:0000304"/>
    <property type="project" value="Reactome"/>
</dbReference>
<dbReference type="GO" id="GO:0070062">
    <property type="term" value="C:extracellular exosome"/>
    <property type="evidence" value="ECO:0007005"/>
    <property type="project" value="UniProtKB"/>
</dbReference>
<dbReference type="GO" id="GO:0044233">
    <property type="term" value="C:mitochondria-associated endoplasmic reticulum membrane contact site"/>
    <property type="evidence" value="ECO:0000314"/>
    <property type="project" value="UniProtKB"/>
</dbReference>
<dbReference type="GO" id="GO:0030234">
    <property type="term" value="F:enzyme regulator activity"/>
    <property type="evidence" value="ECO:0007669"/>
    <property type="project" value="Ensembl"/>
</dbReference>
<dbReference type="GO" id="GO:0042802">
    <property type="term" value="F:identical protein binding"/>
    <property type="evidence" value="ECO:0000353"/>
    <property type="project" value="IntAct"/>
</dbReference>
<dbReference type="GO" id="GO:0003723">
    <property type="term" value="F:RNA binding"/>
    <property type="evidence" value="ECO:0007669"/>
    <property type="project" value="UniProtKB-KW"/>
</dbReference>
<dbReference type="GO" id="GO:0038166">
    <property type="term" value="P:angiotensin-activated signaling pathway"/>
    <property type="evidence" value="ECO:0000314"/>
    <property type="project" value="UniProtKB"/>
</dbReference>
<dbReference type="GO" id="GO:0006915">
    <property type="term" value="P:apoptotic process"/>
    <property type="evidence" value="ECO:0000315"/>
    <property type="project" value="UniProtKB"/>
</dbReference>
<dbReference type="GO" id="GO:0042045">
    <property type="term" value="P:epithelial fluid transport"/>
    <property type="evidence" value="ECO:0007669"/>
    <property type="project" value="Ensembl"/>
</dbReference>
<dbReference type="GO" id="GO:1990456">
    <property type="term" value="P:mitochondrion-endoplasmic reticulum membrane tethering"/>
    <property type="evidence" value="ECO:0000315"/>
    <property type="project" value="UniProtKB"/>
</dbReference>
<dbReference type="GO" id="GO:0006730">
    <property type="term" value="P:one-carbon metabolic process"/>
    <property type="evidence" value="ECO:0007669"/>
    <property type="project" value="UniProtKB-KW"/>
</dbReference>
<dbReference type="GO" id="GO:0010765">
    <property type="term" value="P:positive regulation of sodium ion transport"/>
    <property type="evidence" value="ECO:0000315"/>
    <property type="project" value="UniProtKB"/>
</dbReference>
<dbReference type="GO" id="GO:0006611">
    <property type="term" value="P:protein export from nucleus"/>
    <property type="evidence" value="ECO:0007669"/>
    <property type="project" value="Ensembl"/>
</dbReference>
<dbReference type="GO" id="GO:0044070">
    <property type="term" value="P:regulation of monoatomic anion transport"/>
    <property type="evidence" value="ECO:0007669"/>
    <property type="project" value="Ensembl"/>
</dbReference>
<dbReference type="GO" id="GO:0032412">
    <property type="term" value="P:regulation of monoatomic ion transmembrane transporter activity"/>
    <property type="evidence" value="ECO:0000315"/>
    <property type="project" value="UniProtKB"/>
</dbReference>
<dbReference type="GO" id="GO:0031440">
    <property type="term" value="P:regulation of mRNA 3'-end processing"/>
    <property type="evidence" value="ECO:0000314"/>
    <property type="project" value="UniProtKB"/>
</dbReference>
<dbReference type="GO" id="GO:0051592">
    <property type="term" value="P:response to calcium ion"/>
    <property type="evidence" value="ECO:0000314"/>
    <property type="project" value="UniProtKB"/>
</dbReference>
<dbReference type="GO" id="GO:0033353">
    <property type="term" value="P:S-adenosylmethionine cycle"/>
    <property type="evidence" value="ECO:0000318"/>
    <property type="project" value="GO_Central"/>
</dbReference>
<dbReference type="CDD" id="cd00401">
    <property type="entry name" value="SAHH"/>
    <property type="match status" value="1"/>
</dbReference>
<dbReference type="FunFam" id="3.40.50.1480:FF:000002">
    <property type="entry name" value="Adenosylhomocysteinase"/>
    <property type="match status" value="1"/>
</dbReference>
<dbReference type="FunFam" id="3.40.50.1480:FF:000007">
    <property type="entry name" value="Adenosylhomocysteinase"/>
    <property type="match status" value="1"/>
</dbReference>
<dbReference type="FunFam" id="3.40.50.720:FF:000035">
    <property type="entry name" value="Adenosylhomocysteinase"/>
    <property type="match status" value="1"/>
</dbReference>
<dbReference type="FunFam" id="3.40.50.1480:FF:000009">
    <property type="entry name" value="Adenosylhomocysteinase like 2"/>
    <property type="match status" value="1"/>
</dbReference>
<dbReference type="Gene3D" id="3.40.50.1480">
    <property type="entry name" value="Adenosylhomocysteinase-like"/>
    <property type="match status" value="3"/>
</dbReference>
<dbReference type="Gene3D" id="3.40.50.720">
    <property type="entry name" value="NAD(P)-binding Rossmann-like Domain"/>
    <property type="match status" value="1"/>
</dbReference>
<dbReference type="InterPro" id="IPR042172">
    <property type="entry name" value="Adenosylhomocyst_ase-like_sf"/>
</dbReference>
<dbReference type="InterPro" id="IPR000043">
    <property type="entry name" value="Adenosylhomocysteinase-like"/>
</dbReference>
<dbReference type="InterPro" id="IPR015878">
    <property type="entry name" value="Ado_hCys_hydrolase_NAD-bd"/>
</dbReference>
<dbReference type="InterPro" id="IPR036291">
    <property type="entry name" value="NAD(P)-bd_dom_sf"/>
</dbReference>
<dbReference type="InterPro" id="IPR020082">
    <property type="entry name" value="S-Ado-L-homoCys_hydrolase_CS"/>
</dbReference>
<dbReference type="NCBIfam" id="TIGR00936">
    <property type="entry name" value="ahcY"/>
    <property type="match status" value="1"/>
</dbReference>
<dbReference type="NCBIfam" id="NF004005">
    <property type="entry name" value="PRK05476.2-3"/>
    <property type="match status" value="1"/>
</dbReference>
<dbReference type="PANTHER" id="PTHR23420">
    <property type="entry name" value="ADENOSYLHOMOCYSTEINASE"/>
    <property type="match status" value="1"/>
</dbReference>
<dbReference type="PANTHER" id="PTHR23420:SF3">
    <property type="entry name" value="S-ADENOSYLHOMOCYSTEINE HYDROLASE-LIKE PROTEIN 1"/>
    <property type="match status" value="1"/>
</dbReference>
<dbReference type="Pfam" id="PF05221">
    <property type="entry name" value="AdoHcyase"/>
    <property type="match status" value="1"/>
</dbReference>
<dbReference type="Pfam" id="PF00670">
    <property type="entry name" value="AdoHcyase_NAD"/>
    <property type="match status" value="1"/>
</dbReference>
<dbReference type="PIRSF" id="PIRSF001109">
    <property type="entry name" value="Ad_hcy_hydrolase"/>
    <property type="match status" value="1"/>
</dbReference>
<dbReference type="SMART" id="SM00996">
    <property type="entry name" value="AdoHcyase"/>
    <property type="match status" value="1"/>
</dbReference>
<dbReference type="SMART" id="SM00997">
    <property type="entry name" value="AdoHcyase_NAD"/>
    <property type="match status" value="1"/>
</dbReference>
<dbReference type="SUPFAM" id="SSF52283">
    <property type="entry name" value="Formate/glycerate dehydrogenase catalytic domain-like"/>
    <property type="match status" value="1"/>
</dbReference>
<dbReference type="SUPFAM" id="SSF51735">
    <property type="entry name" value="NAD(P)-binding Rossmann-fold domains"/>
    <property type="match status" value="1"/>
</dbReference>
<dbReference type="PROSITE" id="PS00738">
    <property type="entry name" value="ADOHCYASE_1"/>
    <property type="match status" value="1"/>
</dbReference>
<dbReference type="PROSITE" id="PS00739">
    <property type="entry name" value="ADOHCYASE_2"/>
    <property type="match status" value="1"/>
</dbReference>
<accession>O43865</accession>
<accession>B4E168</accession>
<accession>Q2TAJ6</accession>
<accession>Q502W8</accession>
<accession>Q5VSM0</accession>
<accession>Q6P171</accession>
<accession>Q96PK4</accession>
<accession>Q9UG84</accession>
<proteinExistence type="evidence at protein level"/>
<sequence>MSMPDAMPLPGVGEELKQAKEIEDAEKYSFMATVTKAPKKQIQFADDMQEFTKFPTKTGRRSLSRSISQSSTDSYSSAASYTDSSDDEVSPREKQQTNSKGSSNFCVKNIKQAEFGRREIEIAEQDMSALISLRKRAQGEKPLAGAKIVGCTHITAQTAVLIETLCALGAQCRWSACNIYSTQNEVAAALAEAGVAVFAWKGESEDDFWWCIDRCVNMDGWQANMILDDGGDLTHWVYKKYPNVFKKIRGIVEESVTGVHRLYQLSKAGKLCVPAMNVNDSVTKQKFDNLYCCRESILDGLKRTTDVMFGGKQVVVCGYGEVGKGCCAALKALGAIVYITEIDPICALQACMDGFRVVKLNEVIRQVDVVITCTGNKNVVTREHLDRMKNSCIVCNMGHSNTEIDVTSLRTPELTWERVRSQVDHVIWPDGKRVVLLAEGRLLNLSCSTVPTFVLSITATTQALALIELYNAPEGRYKQDVYLLPKKMDEYVASLHLPSFDAHLTELTDDQAKYLGLNKNGPFKPNYYRY</sequence>
<name>SAHH2_HUMAN</name>
<gene>
    <name evidence="25" type="primary">AHCYL1</name>
    <name type="synonym">DCAL</name>
    <name type="synonym">IRBIT</name>
    <name evidence="25" type="synonym">XPVKONA</name>
</gene>
<organism>
    <name type="scientific">Homo sapiens</name>
    <name type="common">Human</name>
    <dbReference type="NCBI Taxonomy" id="9606"/>
    <lineage>
        <taxon>Eukaryota</taxon>
        <taxon>Metazoa</taxon>
        <taxon>Chordata</taxon>
        <taxon>Craniata</taxon>
        <taxon>Vertebrata</taxon>
        <taxon>Euteleostomi</taxon>
        <taxon>Mammalia</taxon>
        <taxon>Eutheria</taxon>
        <taxon>Euarchontoglires</taxon>
        <taxon>Primates</taxon>
        <taxon>Haplorrhini</taxon>
        <taxon>Catarrhini</taxon>
        <taxon>Hominidae</taxon>
        <taxon>Homo</taxon>
    </lineage>
</organism>
<evidence type="ECO:0000250" key="1"/>
<evidence type="ECO:0000250" key="2">
    <source>
        <dbReference type="UniProtKB" id="B5DFN2"/>
    </source>
</evidence>
<evidence type="ECO:0000250" key="3">
    <source>
        <dbReference type="UniProtKB" id="Q80SW1"/>
    </source>
</evidence>
<evidence type="ECO:0000256" key="4">
    <source>
        <dbReference type="SAM" id="MobiDB-lite"/>
    </source>
</evidence>
<evidence type="ECO:0000269" key="5">
    <source>
    </source>
</evidence>
<evidence type="ECO:0000269" key="6">
    <source>
    </source>
</evidence>
<evidence type="ECO:0000269" key="7">
    <source>
    </source>
</evidence>
<evidence type="ECO:0000269" key="8">
    <source>
    </source>
</evidence>
<evidence type="ECO:0000269" key="9">
    <source>
    </source>
</evidence>
<evidence type="ECO:0000269" key="10">
    <source>
    </source>
</evidence>
<evidence type="ECO:0000269" key="11">
    <source>
    </source>
</evidence>
<evidence type="ECO:0000269" key="12">
    <source>
    </source>
</evidence>
<evidence type="ECO:0000269" key="13">
    <source>
    </source>
</evidence>
<evidence type="ECO:0000269" key="14">
    <source>
    </source>
</evidence>
<evidence type="ECO:0000269" key="15">
    <source>
    </source>
</evidence>
<evidence type="ECO:0000303" key="16">
    <source>
    </source>
</evidence>
<evidence type="ECO:0000303" key="17">
    <source>
    </source>
</evidence>
<evidence type="ECO:0000303" key="18">
    <source>
    </source>
</evidence>
<evidence type="ECO:0000303" key="19">
    <source>
    </source>
</evidence>
<evidence type="ECO:0000303" key="20">
    <source>
    </source>
</evidence>
<evidence type="ECO:0000305" key="21"/>
<evidence type="ECO:0000305" key="22">
    <source>
    </source>
</evidence>
<evidence type="ECO:0000305" key="23">
    <source>
    </source>
</evidence>
<evidence type="ECO:0000305" key="24">
    <source>
    </source>
</evidence>
<evidence type="ECO:0000312" key="25">
    <source>
        <dbReference type="HGNC" id="HGNC:344"/>
    </source>
</evidence>
<evidence type="ECO:0007744" key="26">
    <source>
    </source>
</evidence>
<evidence type="ECO:0007744" key="27">
    <source>
    </source>
</evidence>
<evidence type="ECO:0007744" key="28">
    <source>
    </source>
</evidence>
<evidence type="ECO:0007744" key="29">
    <source>
    </source>
</evidence>
<evidence type="ECO:0007829" key="30">
    <source>
        <dbReference type="PDB" id="3MTG"/>
    </source>
</evidence>
<keyword id="KW-0002">3D-structure</keyword>
<keyword id="KW-0007">Acetylation</keyword>
<keyword id="KW-0025">Alternative splicing</keyword>
<keyword id="KW-1003">Cell membrane</keyword>
<keyword id="KW-0963">Cytoplasm</keyword>
<keyword id="KW-0256">Endoplasmic reticulum</keyword>
<keyword id="KW-0472">Membrane</keyword>
<keyword id="KW-0492">Microsome</keyword>
<keyword id="KW-0520">NAD</keyword>
<keyword id="KW-0554">One-carbon metabolism</keyword>
<keyword id="KW-0597">Phosphoprotein</keyword>
<keyword id="KW-1267">Proteomics identification</keyword>
<keyword id="KW-1185">Reference proteome</keyword>
<keyword id="KW-0694">RNA-binding</keyword>